<evidence type="ECO:0000255" key="1">
    <source>
        <dbReference type="HAMAP-Rule" id="MF_00167"/>
    </source>
</evidence>
<gene>
    <name evidence="1" type="primary">csrA</name>
    <name type="ordered locus">EcolC_1016</name>
</gene>
<accession>B1IUY3</accession>
<reference key="1">
    <citation type="submission" date="2008-02" db="EMBL/GenBank/DDBJ databases">
        <title>Complete sequence of Escherichia coli C str. ATCC 8739.</title>
        <authorList>
            <person name="Copeland A."/>
            <person name="Lucas S."/>
            <person name="Lapidus A."/>
            <person name="Glavina del Rio T."/>
            <person name="Dalin E."/>
            <person name="Tice H."/>
            <person name="Bruce D."/>
            <person name="Goodwin L."/>
            <person name="Pitluck S."/>
            <person name="Kiss H."/>
            <person name="Brettin T."/>
            <person name="Detter J.C."/>
            <person name="Han C."/>
            <person name="Kuske C.R."/>
            <person name="Schmutz J."/>
            <person name="Larimer F."/>
            <person name="Land M."/>
            <person name="Hauser L."/>
            <person name="Kyrpides N."/>
            <person name="Mikhailova N."/>
            <person name="Ingram L."/>
            <person name="Richardson P."/>
        </authorList>
    </citation>
    <scope>NUCLEOTIDE SEQUENCE [LARGE SCALE GENOMIC DNA]</scope>
    <source>
        <strain>ATCC 8739 / DSM 1576 / NBRC 3972 / NCIMB 8545 / WDCM 00012 / Crooks</strain>
    </source>
</reference>
<proteinExistence type="inferred from homology"/>
<organism>
    <name type="scientific">Escherichia coli (strain ATCC 8739 / DSM 1576 / NBRC 3972 / NCIMB 8545 / WDCM 00012 / Crooks)</name>
    <dbReference type="NCBI Taxonomy" id="481805"/>
    <lineage>
        <taxon>Bacteria</taxon>
        <taxon>Pseudomonadati</taxon>
        <taxon>Pseudomonadota</taxon>
        <taxon>Gammaproteobacteria</taxon>
        <taxon>Enterobacterales</taxon>
        <taxon>Enterobacteriaceae</taxon>
        <taxon>Escherichia</taxon>
    </lineage>
</organism>
<comment type="function">
    <text evidence="1">A key translational regulator that binds mRNA to regulate translation initiation and/or mRNA stability. Mediates global changes in gene expression, shifting from rapid growth to stress survival by linking envelope stress, the stringent response and the catabolite repression systems. Usually binds in the 5'-UTR; binding at or near the Shine-Dalgarno sequence prevents ribosome-binding, repressing translation, binding elsewhere in the 5'-UTR can activate translation and/or stabilize the mRNA. Its function is antagonized by small RNA(s).</text>
</comment>
<comment type="subunit">
    <text evidence="1">Homodimer; the beta-strands of each monomer intercalate to form a hydrophobic core, while the alpha-helices form wings that extend away from the core.</text>
</comment>
<comment type="subcellular location">
    <subcellularLocation>
        <location evidence="1">Cytoplasm</location>
    </subcellularLocation>
</comment>
<comment type="similarity">
    <text evidence="1">Belongs to the CsrA/RsmA family.</text>
</comment>
<sequence length="61" mass="6856">MLILTRRVGETLMIGDEVTVTVLGVKGNQVRIGVNAPKEVSVHREEIYQRIQAEKSQQSSY</sequence>
<feature type="chain" id="PRO_1000076991" description="Translational regulator CsrA">
    <location>
        <begin position="1"/>
        <end position="61"/>
    </location>
</feature>
<name>CSRA_ECOLC</name>
<protein>
    <recommendedName>
        <fullName evidence="1">Translational regulator CsrA</fullName>
    </recommendedName>
    <alternativeName>
        <fullName evidence="1">Carbon storage regulator</fullName>
    </alternativeName>
</protein>
<keyword id="KW-0010">Activator</keyword>
<keyword id="KW-0963">Cytoplasm</keyword>
<keyword id="KW-0678">Repressor</keyword>
<keyword id="KW-0694">RNA-binding</keyword>
<keyword id="KW-0810">Translation regulation</keyword>
<dbReference type="EMBL" id="CP000946">
    <property type="protein sequence ID" value="ACA76685.1"/>
    <property type="molecule type" value="Genomic_DNA"/>
</dbReference>
<dbReference type="RefSeq" id="WP_000906486.1">
    <property type="nucleotide sequence ID" value="NZ_MTFT01000026.1"/>
</dbReference>
<dbReference type="SMR" id="B1IUY3"/>
<dbReference type="GeneID" id="98389839"/>
<dbReference type="KEGG" id="ecl:EcolC_1016"/>
<dbReference type="HOGENOM" id="CLU_164837_2_1_6"/>
<dbReference type="GO" id="GO:0005829">
    <property type="term" value="C:cytosol"/>
    <property type="evidence" value="ECO:0007669"/>
    <property type="project" value="TreeGrafter"/>
</dbReference>
<dbReference type="GO" id="GO:0048027">
    <property type="term" value="F:mRNA 5'-UTR binding"/>
    <property type="evidence" value="ECO:0007669"/>
    <property type="project" value="UniProtKB-UniRule"/>
</dbReference>
<dbReference type="GO" id="GO:0006402">
    <property type="term" value="P:mRNA catabolic process"/>
    <property type="evidence" value="ECO:0007669"/>
    <property type="project" value="InterPro"/>
</dbReference>
<dbReference type="GO" id="GO:0045947">
    <property type="term" value="P:negative regulation of translational initiation"/>
    <property type="evidence" value="ECO:0007669"/>
    <property type="project" value="UniProtKB-UniRule"/>
</dbReference>
<dbReference type="GO" id="GO:0045948">
    <property type="term" value="P:positive regulation of translational initiation"/>
    <property type="evidence" value="ECO:0007669"/>
    <property type="project" value="UniProtKB-UniRule"/>
</dbReference>
<dbReference type="GO" id="GO:0006109">
    <property type="term" value="P:regulation of carbohydrate metabolic process"/>
    <property type="evidence" value="ECO:0007669"/>
    <property type="project" value="UniProtKB-UniRule"/>
</dbReference>
<dbReference type="FunFam" id="2.60.40.4380:FF:000001">
    <property type="entry name" value="Translational regulator CsrA"/>
    <property type="match status" value="1"/>
</dbReference>
<dbReference type="Gene3D" id="2.60.40.4380">
    <property type="entry name" value="Translational regulator CsrA"/>
    <property type="match status" value="1"/>
</dbReference>
<dbReference type="HAMAP" id="MF_00167">
    <property type="entry name" value="CsrA"/>
    <property type="match status" value="1"/>
</dbReference>
<dbReference type="InterPro" id="IPR003751">
    <property type="entry name" value="CsrA"/>
</dbReference>
<dbReference type="InterPro" id="IPR036107">
    <property type="entry name" value="CsrA_sf"/>
</dbReference>
<dbReference type="NCBIfam" id="TIGR00202">
    <property type="entry name" value="csrA"/>
    <property type="match status" value="1"/>
</dbReference>
<dbReference type="NCBIfam" id="NF002469">
    <property type="entry name" value="PRK01712.1"/>
    <property type="match status" value="1"/>
</dbReference>
<dbReference type="PANTHER" id="PTHR34984">
    <property type="entry name" value="CARBON STORAGE REGULATOR"/>
    <property type="match status" value="1"/>
</dbReference>
<dbReference type="PANTHER" id="PTHR34984:SF1">
    <property type="entry name" value="CARBON STORAGE REGULATOR"/>
    <property type="match status" value="1"/>
</dbReference>
<dbReference type="Pfam" id="PF02599">
    <property type="entry name" value="CsrA"/>
    <property type="match status" value="1"/>
</dbReference>
<dbReference type="SUPFAM" id="SSF117130">
    <property type="entry name" value="CsrA-like"/>
    <property type="match status" value="1"/>
</dbReference>